<evidence type="ECO:0000255" key="1">
    <source>
        <dbReference type="HAMAP-Rule" id="MF_01527"/>
    </source>
</evidence>
<keyword id="KW-0378">Hydrolase</keyword>
<keyword id="KW-0408">Iron</keyword>
<keyword id="KW-0479">Metal-binding</keyword>
<keyword id="KW-1185">Reference proteome</keyword>
<comment type="function">
    <text evidence="1">Converts GTP to 7,8-dihydro-D-neopterin 2',3'-cyclic phosphate, the first intermediate in the biosynthesis of coenzyme methanopterin.</text>
</comment>
<comment type="catalytic activity">
    <reaction evidence="1">
        <text>GTP + H2O = 7,8-dihydroneopterin 2',3'-cyclic phosphate + formate + diphosphate + H(+)</text>
        <dbReference type="Rhea" id="RHEA:25860"/>
        <dbReference type="ChEBI" id="CHEBI:15377"/>
        <dbReference type="ChEBI" id="CHEBI:15378"/>
        <dbReference type="ChEBI" id="CHEBI:15740"/>
        <dbReference type="ChEBI" id="CHEBI:33019"/>
        <dbReference type="ChEBI" id="CHEBI:37565"/>
        <dbReference type="ChEBI" id="CHEBI:58854"/>
        <dbReference type="EC" id="3.5.4.39"/>
    </reaction>
</comment>
<comment type="cofactor">
    <cofactor evidence="1">
        <name>Fe(2+)</name>
        <dbReference type="ChEBI" id="CHEBI:29033"/>
    </cofactor>
    <text evidence="1">Binds 1 Fe(2+) ion per subunit.</text>
</comment>
<comment type="pathway">
    <text evidence="1">Cofactor biosynthesis; 5,6,7,8-tetrahydromethanopterin biosynthesis.</text>
</comment>
<comment type="subunit">
    <text evidence="1">Homodimer.</text>
</comment>
<comment type="similarity">
    <text evidence="1">Belongs to the GTP cyclohydrolase IV family.</text>
</comment>
<feature type="chain" id="PRO_0000147746" description="GTP cyclohydrolase MptA">
    <location>
        <begin position="1"/>
        <end position="315"/>
    </location>
</feature>
<feature type="site" description="May be catalytically important" evidence="1">
    <location>
        <position position="161"/>
    </location>
</feature>
<organism>
    <name type="scientific">Methanococcus maripaludis (strain DSM 14266 / JCM 13030 / NBRC 101832 / S2 / LL)</name>
    <dbReference type="NCBI Taxonomy" id="267377"/>
    <lineage>
        <taxon>Archaea</taxon>
        <taxon>Methanobacteriati</taxon>
        <taxon>Methanobacteriota</taxon>
        <taxon>Methanomada group</taxon>
        <taxon>Methanococci</taxon>
        <taxon>Methanococcales</taxon>
        <taxon>Methanococcaceae</taxon>
        <taxon>Methanococcus</taxon>
    </lineage>
</organism>
<reference key="1">
    <citation type="journal article" date="2004" name="J. Bacteriol.">
        <title>Complete genome sequence of the genetically tractable hydrogenotrophic methanogen Methanococcus maripaludis.</title>
        <authorList>
            <person name="Hendrickson E.L."/>
            <person name="Kaul R."/>
            <person name="Zhou Y."/>
            <person name="Bovee D."/>
            <person name="Chapman P."/>
            <person name="Chung J."/>
            <person name="Conway de Macario E."/>
            <person name="Dodsworth J.A."/>
            <person name="Gillett W."/>
            <person name="Graham D.E."/>
            <person name="Hackett M."/>
            <person name="Haydock A.K."/>
            <person name="Kang A."/>
            <person name="Land M.L."/>
            <person name="Levy R."/>
            <person name="Lie T.J."/>
            <person name="Major T.A."/>
            <person name="Moore B.C."/>
            <person name="Porat I."/>
            <person name="Palmeiri A."/>
            <person name="Rouse G."/>
            <person name="Saenphimmachak C."/>
            <person name="Soell D."/>
            <person name="Van Dien S."/>
            <person name="Wang T."/>
            <person name="Whitman W.B."/>
            <person name="Xia Q."/>
            <person name="Zhang Y."/>
            <person name="Larimer F.W."/>
            <person name="Olson M.V."/>
            <person name="Leigh J.A."/>
        </authorList>
    </citation>
    <scope>NUCLEOTIDE SEQUENCE [LARGE SCALE GENOMIC DNA]</scope>
    <source>
        <strain>DSM 14266 / JCM 13030 / NBRC 101832 / S2 / LL</strain>
    </source>
</reference>
<gene>
    <name evidence="1" type="primary">mptA</name>
    <name type="ordered locus">MMP0034</name>
</gene>
<name>MPTA_METMP</name>
<proteinExistence type="inferred from homology"/>
<sequence length="315" mass="35607">MQCNDVQATEPDIKVSLTRVGVTNLKKLVKLKRKNKRDIVLLPTFEVFVDLPSSQKGIHMSRSPEVIEEVVENILLEKEIYGVEDLSVEIVMKLFEKHEYATRAEVMLYSDYMMEEKSPVTKKDSQEIGKIIARAYGVKDSNGKIDVKKMVGAEVVGITACPCAQNMLKENAVVSLTEKGFSSEDIEKILDSVTIATHNQRGIGTVMIEVPNGYTVGISKIIKIIKDSMSGEVYELLKRSDEAFVVEAAHKNPKFVEDCAREMIKRVVDVFDYLPEDTQVLVRQVNKESIHRHDAFAERNSTIRELRDELKTLTN</sequence>
<accession>Q6M183</accession>
<dbReference type="EC" id="3.5.4.39" evidence="1"/>
<dbReference type="EMBL" id="BX950229">
    <property type="protein sequence ID" value="CAF29590.1"/>
    <property type="molecule type" value="Genomic_DNA"/>
</dbReference>
<dbReference type="RefSeq" id="WP_011169978.1">
    <property type="nucleotide sequence ID" value="NC_005791.1"/>
</dbReference>
<dbReference type="SMR" id="Q6M183"/>
<dbReference type="STRING" id="267377.MMP0034"/>
<dbReference type="EnsemblBacteria" id="CAF29590">
    <property type="protein sequence ID" value="CAF29590"/>
    <property type="gene ID" value="MMP0034"/>
</dbReference>
<dbReference type="GeneID" id="10981455"/>
<dbReference type="GeneID" id="2762706"/>
<dbReference type="KEGG" id="mmp:MMP0034"/>
<dbReference type="PATRIC" id="fig|267377.15.peg.34"/>
<dbReference type="eggNOG" id="arCOG04301">
    <property type="taxonomic scope" value="Archaea"/>
</dbReference>
<dbReference type="HOGENOM" id="CLU_062816_1_0_2"/>
<dbReference type="OrthoDB" id="53087at2157"/>
<dbReference type="UniPathway" id="UPA00065"/>
<dbReference type="Proteomes" id="UP000000590">
    <property type="component" value="Chromosome"/>
</dbReference>
<dbReference type="GO" id="GO:0003934">
    <property type="term" value="F:GTP cyclohydrolase I activity"/>
    <property type="evidence" value="ECO:0007669"/>
    <property type="project" value="InterPro"/>
</dbReference>
<dbReference type="GO" id="GO:0044682">
    <property type="term" value="F:GTP cyclohydrolase IV activity"/>
    <property type="evidence" value="ECO:0007669"/>
    <property type="project" value="UniProtKB-UniRule"/>
</dbReference>
<dbReference type="GO" id="GO:0005506">
    <property type="term" value="F:iron ion binding"/>
    <property type="evidence" value="ECO:0007669"/>
    <property type="project" value="UniProtKB-UniRule"/>
</dbReference>
<dbReference type="GO" id="GO:2001118">
    <property type="term" value="P:tetrahydromethanopterin biosynthetic process"/>
    <property type="evidence" value="ECO:0007669"/>
    <property type="project" value="UniProtKB-UniRule"/>
</dbReference>
<dbReference type="Gene3D" id="3.10.270.10">
    <property type="entry name" value="Urate Oxidase"/>
    <property type="match status" value="1"/>
</dbReference>
<dbReference type="HAMAP" id="MF_01527_A">
    <property type="entry name" value="GTP_cyclohydrol_A"/>
    <property type="match status" value="1"/>
</dbReference>
<dbReference type="InterPro" id="IPR003801">
    <property type="entry name" value="GTP_cyclohydrolase_FolE2/MptA"/>
</dbReference>
<dbReference type="InterPro" id="IPR022840">
    <property type="entry name" value="GTP_cyclohydrolase_MptA"/>
</dbReference>
<dbReference type="NCBIfam" id="TIGR00294">
    <property type="entry name" value="GTP cyclohydrolase MptA"/>
    <property type="match status" value="1"/>
</dbReference>
<dbReference type="PANTHER" id="PTHR36445">
    <property type="entry name" value="GTP CYCLOHYDROLASE MPTA"/>
    <property type="match status" value="1"/>
</dbReference>
<dbReference type="PANTHER" id="PTHR36445:SF1">
    <property type="entry name" value="GTP CYCLOHYDROLASE MPTA"/>
    <property type="match status" value="1"/>
</dbReference>
<dbReference type="Pfam" id="PF02649">
    <property type="entry name" value="GCHY-1"/>
    <property type="match status" value="1"/>
</dbReference>
<protein>
    <recommendedName>
        <fullName evidence="1">GTP cyclohydrolase MptA</fullName>
        <ecNumber evidence="1">3.5.4.39</ecNumber>
    </recommendedName>
    <alternativeName>
        <fullName evidence="1">GTP cyclohydrolase IV</fullName>
    </alternativeName>
</protein>